<reference key="1">
    <citation type="journal article" date="2004" name="Nat. Genet.">
        <title>Comparison of genome degradation in Paratyphi A and Typhi, human-restricted serovars of Salmonella enterica that cause typhoid.</title>
        <authorList>
            <person name="McClelland M."/>
            <person name="Sanderson K.E."/>
            <person name="Clifton S.W."/>
            <person name="Latreille P."/>
            <person name="Porwollik S."/>
            <person name="Sabo A."/>
            <person name="Meyer R."/>
            <person name="Bieri T."/>
            <person name="Ozersky P."/>
            <person name="McLellan M."/>
            <person name="Harkins C.R."/>
            <person name="Wang C."/>
            <person name="Nguyen C."/>
            <person name="Berghoff A."/>
            <person name="Elliott G."/>
            <person name="Kohlberg S."/>
            <person name="Strong C."/>
            <person name="Du F."/>
            <person name="Carter J."/>
            <person name="Kremizki C."/>
            <person name="Layman D."/>
            <person name="Leonard S."/>
            <person name="Sun H."/>
            <person name="Fulton L."/>
            <person name="Nash W."/>
            <person name="Miner T."/>
            <person name="Minx P."/>
            <person name="Delehaunty K."/>
            <person name="Fronick C."/>
            <person name="Magrini V."/>
            <person name="Nhan M."/>
            <person name="Warren W."/>
            <person name="Florea L."/>
            <person name="Spieth J."/>
            <person name="Wilson R.K."/>
        </authorList>
    </citation>
    <scope>NUCLEOTIDE SEQUENCE [LARGE SCALE GENOMIC DNA]</scope>
    <source>
        <strain>ATCC 9150 / SARB42</strain>
    </source>
</reference>
<dbReference type="EC" id="3.1.1.29" evidence="1"/>
<dbReference type="EMBL" id="CP000026">
    <property type="protein sequence ID" value="AAV77059.1"/>
    <property type="status" value="ALT_INIT"/>
    <property type="molecule type" value="Genomic_DNA"/>
</dbReference>
<dbReference type="RefSeq" id="WP_000985595.1">
    <property type="nucleotide sequence ID" value="NC_006511.1"/>
</dbReference>
<dbReference type="SMR" id="Q5PCR7"/>
<dbReference type="KEGG" id="spt:SPA1090"/>
<dbReference type="HOGENOM" id="CLU_062456_3_1_6"/>
<dbReference type="Proteomes" id="UP000008185">
    <property type="component" value="Chromosome"/>
</dbReference>
<dbReference type="GO" id="GO:0005737">
    <property type="term" value="C:cytoplasm"/>
    <property type="evidence" value="ECO:0007669"/>
    <property type="project" value="UniProtKB-SubCell"/>
</dbReference>
<dbReference type="GO" id="GO:0004045">
    <property type="term" value="F:peptidyl-tRNA hydrolase activity"/>
    <property type="evidence" value="ECO:0007669"/>
    <property type="project" value="UniProtKB-UniRule"/>
</dbReference>
<dbReference type="GO" id="GO:0000049">
    <property type="term" value="F:tRNA binding"/>
    <property type="evidence" value="ECO:0007669"/>
    <property type="project" value="UniProtKB-UniRule"/>
</dbReference>
<dbReference type="GO" id="GO:0006515">
    <property type="term" value="P:protein quality control for misfolded or incompletely synthesized proteins"/>
    <property type="evidence" value="ECO:0007669"/>
    <property type="project" value="UniProtKB-UniRule"/>
</dbReference>
<dbReference type="GO" id="GO:0072344">
    <property type="term" value="P:rescue of stalled ribosome"/>
    <property type="evidence" value="ECO:0007669"/>
    <property type="project" value="UniProtKB-UniRule"/>
</dbReference>
<dbReference type="CDD" id="cd00462">
    <property type="entry name" value="PTH"/>
    <property type="match status" value="1"/>
</dbReference>
<dbReference type="FunFam" id="3.40.50.1470:FF:000001">
    <property type="entry name" value="Peptidyl-tRNA hydrolase"/>
    <property type="match status" value="1"/>
</dbReference>
<dbReference type="Gene3D" id="3.40.50.1470">
    <property type="entry name" value="Peptidyl-tRNA hydrolase"/>
    <property type="match status" value="1"/>
</dbReference>
<dbReference type="HAMAP" id="MF_00083">
    <property type="entry name" value="Pept_tRNA_hydro_bact"/>
    <property type="match status" value="1"/>
</dbReference>
<dbReference type="InterPro" id="IPR001328">
    <property type="entry name" value="Pept_tRNA_hydro"/>
</dbReference>
<dbReference type="InterPro" id="IPR018171">
    <property type="entry name" value="Pept_tRNA_hydro_CS"/>
</dbReference>
<dbReference type="InterPro" id="IPR036416">
    <property type="entry name" value="Pept_tRNA_hydro_sf"/>
</dbReference>
<dbReference type="NCBIfam" id="TIGR00447">
    <property type="entry name" value="pth"/>
    <property type="match status" value="1"/>
</dbReference>
<dbReference type="PANTHER" id="PTHR17224">
    <property type="entry name" value="PEPTIDYL-TRNA HYDROLASE"/>
    <property type="match status" value="1"/>
</dbReference>
<dbReference type="PANTHER" id="PTHR17224:SF1">
    <property type="entry name" value="PEPTIDYL-TRNA HYDROLASE"/>
    <property type="match status" value="1"/>
</dbReference>
<dbReference type="Pfam" id="PF01195">
    <property type="entry name" value="Pept_tRNA_hydro"/>
    <property type="match status" value="1"/>
</dbReference>
<dbReference type="SUPFAM" id="SSF53178">
    <property type="entry name" value="Peptidyl-tRNA hydrolase-like"/>
    <property type="match status" value="1"/>
</dbReference>
<dbReference type="PROSITE" id="PS01195">
    <property type="entry name" value="PEPT_TRNA_HYDROL_1"/>
    <property type="match status" value="1"/>
</dbReference>
<dbReference type="PROSITE" id="PS01196">
    <property type="entry name" value="PEPT_TRNA_HYDROL_2"/>
    <property type="match status" value="1"/>
</dbReference>
<sequence length="194" mass="21178">MAIKLIVGLANPGAEYAATRHNAGAWYVDLLAERLRAPLREEPKFFGYTSRITLEGEDVRLLVPTTFMNLSGKAVGAMASFYRIQPDEILVAHDELDLPPGVAKFKLGGGHGGHNGLKDIISKLGNNPNFHRLRVGIGHPGDKNKVVGFVLGKPPVSEQKLIDEAIDEAARCTELWFKEGLAKATSRLHTFKAQ</sequence>
<gene>
    <name evidence="1" type="primary">pth</name>
    <name type="ordered locus">SPA1090</name>
</gene>
<evidence type="ECO:0000255" key="1">
    <source>
        <dbReference type="HAMAP-Rule" id="MF_00083"/>
    </source>
</evidence>
<evidence type="ECO:0000305" key="2"/>
<accession>Q5PCR7</accession>
<organism>
    <name type="scientific">Salmonella paratyphi A (strain ATCC 9150 / SARB42)</name>
    <dbReference type="NCBI Taxonomy" id="295319"/>
    <lineage>
        <taxon>Bacteria</taxon>
        <taxon>Pseudomonadati</taxon>
        <taxon>Pseudomonadota</taxon>
        <taxon>Gammaproteobacteria</taxon>
        <taxon>Enterobacterales</taxon>
        <taxon>Enterobacteriaceae</taxon>
        <taxon>Salmonella</taxon>
    </lineage>
</organism>
<keyword id="KW-0963">Cytoplasm</keyword>
<keyword id="KW-0378">Hydrolase</keyword>
<keyword id="KW-0694">RNA-binding</keyword>
<keyword id="KW-0820">tRNA-binding</keyword>
<proteinExistence type="inferred from homology"/>
<name>PTH_SALPA</name>
<comment type="function">
    <text evidence="1">Hydrolyzes ribosome-free peptidyl-tRNAs (with 1 or more amino acids incorporated), which drop off the ribosome during protein synthesis, or as a result of ribosome stalling.</text>
</comment>
<comment type="function">
    <text evidence="1">Catalyzes the release of premature peptidyl moieties from peptidyl-tRNA molecules trapped in stalled 50S ribosomal subunits, and thus maintains levels of free tRNAs and 50S ribosomes.</text>
</comment>
<comment type="catalytic activity">
    <reaction evidence="1">
        <text>an N-acyl-L-alpha-aminoacyl-tRNA + H2O = an N-acyl-L-amino acid + a tRNA + H(+)</text>
        <dbReference type="Rhea" id="RHEA:54448"/>
        <dbReference type="Rhea" id="RHEA-COMP:10123"/>
        <dbReference type="Rhea" id="RHEA-COMP:13883"/>
        <dbReference type="ChEBI" id="CHEBI:15377"/>
        <dbReference type="ChEBI" id="CHEBI:15378"/>
        <dbReference type="ChEBI" id="CHEBI:59874"/>
        <dbReference type="ChEBI" id="CHEBI:78442"/>
        <dbReference type="ChEBI" id="CHEBI:138191"/>
        <dbReference type="EC" id="3.1.1.29"/>
    </reaction>
</comment>
<comment type="subunit">
    <text evidence="1">Monomer.</text>
</comment>
<comment type="subcellular location">
    <subcellularLocation>
        <location evidence="1">Cytoplasm</location>
    </subcellularLocation>
</comment>
<comment type="similarity">
    <text evidence="1">Belongs to the PTH family.</text>
</comment>
<comment type="sequence caution" evidence="2">
    <conflict type="erroneous initiation">
        <sequence resource="EMBL-CDS" id="AAV77059"/>
    </conflict>
    <text>Extended N-terminus.</text>
</comment>
<protein>
    <recommendedName>
        <fullName evidence="1">Peptidyl-tRNA hydrolase</fullName>
        <shortName evidence="1">Pth</shortName>
        <ecNumber evidence="1">3.1.1.29</ecNumber>
    </recommendedName>
</protein>
<feature type="chain" id="PRO_0000187808" description="Peptidyl-tRNA hydrolase">
    <location>
        <begin position="1"/>
        <end position="194"/>
    </location>
</feature>
<feature type="active site" description="Proton acceptor" evidence="1">
    <location>
        <position position="21"/>
    </location>
</feature>
<feature type="binding site" evidence="1">
    <location>
        <position position="16"/>
    </location>
    <ligand>
        <name>tRNA</name>
        <dbReference type="ChEBI" id="CHEBI:17843"/>
    </ligand>
</feature>
<feature type="binding site" evidence="1">
    <location>
        <position position="67"/>
    </location>
    <ligand>
        <name>tRNA</name>
        <dbReference type="ChEBI" id="CHEBI:17843"/>
    </ligand>
</feature>
<feature type="binding site" evidence="1">
    <location>
        <position position="69"/>
    </location>
    <ligand>
        <name>tRNA</name>
        <dbReference type="ChEBI" id="CHEBI:17843"/>
    </ligand>
</feature>
<feature type="binding site" evidence="1">
    <location>
        <position position="115"/>
    </location>
    <ligand>
        <name>tRNA</name>
        <dbReference type="ChEBI" id="CHEBI:17843"/>
    </ligand>
</feature>
<feature type="site" description="Discriminates between blocked and unblocked aminoacyl-tRNA" evidence="1">
    <location>
        <position position="11"/>
    </location>
</feature>
<feature type="site" description="Stabilizes the basic form of H active site to accept a proton" evidence="1">
    <location>
        <position position="94"/>
    </location>
</feature>